<keyword id="KW-0472">Membrane</keyword>
<keyword id="KW-0496">Mitochondrion</keyword>
<keyword id="KW-0999">Mitochondrion inner membrane</keyword>
<keyword id="KW-1185">Reference proteome</keyword>
<keyword id="KW-0677">Repeat</keyword>
<keyword id="KW-0812">Transmembrane</keyword>
<keyword id="KW-1133">Transmembrane helix</keyword>
<keyword id="KW-0813">Transport</keyword>
<proteinExistence type="inferred from homology"/>
<dbReference type="EMBL" id="CU329671">
    <property type="protein sequence ID" value="CAA22201.1"/>
    <property type="molecule type" value="Genomic_DNA"/>
</dbReference>
<dbReference type="PIR" id="T39347">
    <property type="entry name" value="T39347"/>
</dbReference>
<dbReference type="SMR" id="O94344"/>
<dbReference type="FunCoup" id="O94344">
    <property type="interactions" value="37"/>
</dbReference>
<dbReference type="PaxDb" id="4896-SPBC1271.11.1"/>
<dbReference type="EnsemblFungi" id="SPBC1271.11.1">
    <property type="protein sequence ID" value="SPBC1271.11.1:pep"/>
    <property type="gene ID" value="SPBC1271.11"/>
</dbReference>
<dbReference type="KEGG" id="spo:2540171"/>
<dbReference type="PomBase" id="SPBC1271.11"/>
<dbReference type="VEuPathDB" id="FungiDB:SPBC1271.11"/>
<dbReference type="eggNOG" id="KOG0768">
    <property type="taxonomic scope" value="Eukaryota"/>
</dbReference>
<dbReference type="HOGENOM" id="CLU_015166_3_0_1"/>
<dbReference type="InParanoid" id="O94344"/>
<dbReference type="OMA" id="KTRMRLP"/>
<dbReference type="PhylomeDB" id="O94344"/>
<dbReference type="PRO" id="PR:O94344"/>
<dbReference type="Proteomes" id="UP000002485">
    <property type="component" value="Chromosome II"/>
</dbReference>
<dbReference type="GO" id="GO:0005743">
    <property type="term" value="C:mitochondrial inner membrane"/>
    <property type="evidence" value="ECO:0000318"/>
    <property type="project" value="GO_Central"/>
</dbReference>
<dbReference type="GO" id="GO:0005739">
    <property type="term" value="C:mitochondrion"/>
    <property type="evidence" value="ECO:0007005"/>
    <property type="project" value="PomBase"/>
</dbReference>
<dbReference type="GO" id="GO:0000095">
    <property type="term" value="F:S-adenosyl-L-methionine transmembrane transporter activity"/>
    <property type="evidence" value="ECO:0000318"/>
    <property type="project" value="GO_Central"/>
</dbReference>
<dbReference type="GO" id="GO:1990543">
    <property type="term" value="P:mitochondrial S-adenosyl-L-methionine transmembrane transport"/>
    <property type="evidence" value="ECO:0000266"/>
    <property type="project" value="PomBase"/>
</dbReference>
<dbReference type="Gene3D" id="1.50.40.10">
    <property type="entry name" value="Mitochondrial carrier domain"/>
    <property type="match status" value="1"/>
</dbReference>
<dbReference type="InterPro" id="IPR018108">
    <property type="entry name" value="Mitochondrial_sb/sol_carrier"/>
</dbReference>
<dbReference type="InterPro" id="IPR023395">
    <property type="entry name" value="Mt_carrier_dom_sf"/>
</dbReference>
<dbReference type="PANTHER" id="PTHR45667">
    <property type="entry name" value="S-ADENOSYLMETHIONINE MITOCHONDRIAL CARRIER PROTEIN"/>
    <property type="match status" value="1"/>
</dbReference>
<dbReference type="Pfam" id="PF00153">
    <property type="entry name" value="Mito_carr"/>
    <property type="match status" value="3"/>
</dbReference>
<dbReference type="SUPFAM" id="SSF103506">
    <property type="entry name" value="Mitochondrial carrier"/>
    <property type="match status" value="1"/>
</dbReference>
<dbReference type="PROSITE" id="PS50920">
    <property type="entry name" value="SOLCAR"/>
    <property type="match status" value="3"/>
</dbReference>
<gene>
    <name type="ORF">SPBC1271.11</name>
</gene>
<accession>O94344</accession>
<name>YHMB_SCHPO</name>
<protein>
    <recommendedName>
        <fullName>Uncharacterized mitochondrial carrier C1271.11</fullName>
    </recommendedName>
</protein>
<comment type="subcellular location">
    <subcellularLocation>
        <location evidence="3">Mitochondrion inner membrane</location>
        <topology evidence="3">Multi-pass membrane protein</topology>
    </subcellularLocation>
</comment>
<comment type="similarity">
    <text evidence="2">Belongs to the mitochondrial carrier (TC 2.A.29) family.</text>
</comment>
<reference key="1">
    <citation type="journal article" date="2002" name="Nature">
        <title>The genome sequence of Schizosaccharomyces pombe.</title>
        <authorList>
            <person name="Wood V."/>
            <person name="Gwilliam R."/>
            <person name="Rajandream M.A."/>
            <person name="Lyne M.H."/>
            <person name="Lyne R."/>
            <person name="Stewart A."/>
            <person name="Sgouros J.G."/>
            <person name="Peat N."/>
            <person name="Hayles J."/>
            <person name="Baker S.G."/>
            <person name="Basham D."/>
            <person name="Bowman S."/>
            <person name="Brooks K."/>
            <person name="Brown D."/>
            <person name="Brown S."/>
            <person name="Chillingworth T."/>
            <person name="Churcher C.M."/>
            <person name="Collins M."/>
            <person name="Connor R."/>
            <person name="Cronin A."/>
            <person name="Davis P."/>
            <person name="Feltwell T."/>
            <person name="Fraser A."/>
            <person name="Gentles S."/>
            <person name="Goble A."/>
            <person name="Hamlin N."/>
            <person name="Harris D.E."/>
            <person name="Hidalgo J."/>
            <person name="Hodgson G."/>
            <person name="Holroyd S."/>
            <person name="Hornsby T."/>
            <person name="Howarth S."/>
            <person name="Huckle E.J."/>
            <person name="Hunt S."/>
            <person name="Jagels K."/>
            <person name="James K.D."/>
            <person name="Jones L."/>
            <person name="Jones M."/>
            <person name="Leather S."/>
            <person name="McDonald S."/>
            <person name="McLean J."/>
            <person name="Mooney P."/>
            <person name="Moule S."/>
            <person name="Mungall K.L."/>
            <person name="Murphy L.D."/>
            <person name="Niblett D."/>
            <person name="Odell C."/>
            <person name="Oliver K."/>
            <person name="O'Neil S."/>
            <person name="Pearson D."/>
            <person name="Quail M.A."/>
            <person name="Rabbinowitsch E."/>
            <person name="Rutherford K.M."/>
            <person name="Rutter S."/>
            <person name="Saunders D."/>
            <person name="Seeger K."/>
            <person name="Sharp S."/>
            <person name="Skelton J."/>
            <person name="Simmonds M.N."/>
            <person name="Squares R."/>
            <person name="Squares S."/>
            <person name="Stevens K."/>
            <person name="Taylor K."/>
            <person name="Taylor R.G."/>
            <person name="Tivey A."/>
            <person name="Walsh S.V."/>
            <person name="Warren T."/>
            <person name="Whitehead S."/>
            <person name="Woodward J.R."/>
            <person name="Volckaert G."/>
            <person name="Aert R."/>
            <person name="Robben J."/>
            <person name="Grymonprez B."/>
            <person name="Weltjens I."/>
            <person name="Vanstreels E."/>
            <person name="Rieger M."/>
            <person name="Schaefer M."/>
            <person name="Mueller-Auer S."/>
            <person name="Gabel C."/>
            <person name="Fuchs M."/>
            <person name="Duesterhoeft A."/>
            <person name="Fritzc C."/>
            <person name="Holzer E."/>
            <person name="Moestl D."/>
            <person name="Hilbert H."/>
            <person name="Borzym K."/>
            <person name="Langer I."/>
            <person name="Beck A."/>
            <person name="Lehrach H."/>
            <person name="Reinhardt R."/>
            <person name="Pohl T.M."/>
            <person name="Eger P."/>
            <person name="Zimmermann W."/>
            <person name="Wedler H."/>
            <person name="Wambutt R."/>
            <person name="Purnelle B."/>
            <person name="Goffeau A."/>
            <person name="Cadieu E."/>
            <person name="Dreano S."/>
            <person name="Gloux S."/>
            <person name="Lelaure V."/>
            <person name="Mottier S."/>
            <person name="Galibert F."/>
            <person name="Aves S.J."/>
            <person name="Xiang Z."/>
            <person name="Hunt C."/>
            <person name="Moore K."/>
            <person name="Hurst S.M."/>
            <person name="Lucas M."/>
            <person name="Rochet M."/>
            <person name="Gaillardin C."/>
            <person name="Tallada V.A."/>
            <person name="Garzon A."/>
            <person name="Thode G."/>
            <person name="Daga R.R."/>
            <person name="Cruzado L."/>
            <person name="Jimenez J."/>
            <person name="Sanchez M."/>
            <person name="del Rey F."/>
            <person name="Benito J."/>
            <person name="Dominguez A."/>
            <person name="Revuelta J.L."/>
            <person name="Moreno S."/>
            <person name="Armstrong J."/>
            <person name="Forsburg S.L."/>
            <person name="Cerutti L."/>
            <person name="Lowe T."/>
            <person name="McCombie W.R."/>
            <person name="Paulsen I."/>
            <person name="Potashkin J."/>
            <person name="Shpakovski G.V."/>
            <person name="Ussery D."/>
            <person name="Barrell B.G."/>
            <person name="Nurse P."/>
        </authorList>
    </citation>
    <scope>NUCLEOTIDE SEQUENCE [LARGE SCALE GENOMIC DNA]</scope>
    <source>
        <strain>972 / ATCC 24843</strain>
    </source>
</reference>
<reference key="2">
    <citation type="journal article" date="2006" name="Nat. Biotechnol.">
        <title>ORFeome cloning and global analysis of protein localization in the fission yeast Schizosaccharomyces pombe.</title>
        <authorList>
            <person name="Matsuyama A."/>
            <person name="Arai R."/>
            <person name="Yashiroda Y."/>
            <person name="Shirai A."/>
            <person name="Kamata A."/>
            <person name="Sekido S."/>
            <person name="Kobayashi Y."/>
            <person name="Hashimoto A."/>
            <person name="Hamamoto M."/>
            <person name="Hiraoka Y."/>
            <person name="Horinouchi S."/>
            <person name="Yoshida M."/>
        </authorList>
    </citation>
    <scope>SUBCELLULAR LOCATION [LARGE SCALE ANALYSIS]</scope>
</reference>
<evidence type="ECO:0000255" key="1"/>
<evidence type="ECO:0000305" key="2"/>
<evidence type="ECO:0000305" key="3">
    <source>
    </source>
</evidence>
<feature type="chain" id="PRO_0000310797" description="Uncharacterized mitochondrial carrier C1271.11">
    <location>
        <begin position="1"/>
        <end position="258"/>
    </location>
</feature>
<feature type="transmembrane region" description="Helical; Name=1" evidence="1">
    <location>
        <begin position="11"/>
        <end position="31"/>
    </location>
</feature>
<feature type="transmembrane region" description="Helical; Name=2" evidence="1">
    <location>
        <begin position="53"/>
        <end position="73"/>
    </location>
</feature>
<feature type="transmembrane region" description="Helical; Name=3" evidence="1">
    <location>
        <begin position="87"/>
        <end position="107"/>
    </location>
</feature>
<feature type="transmembrane region" description="Helical; Name=4" evidence="1">
    <location>
        <begin position="139"/>
        <end position="159"/>
    </location>
</feature>
<feature type="transmembrane region" description="Helical; Name=5" evidence="1">
    <location>
        <begin position="171"/>
        <end position="191"/>
    </location>
</feature>
<feature type="transmembrane region" description="Helical; Name=6" evidence="1">
    <location>
        <begin position="218"/>
        <end position="239"/>
    </location>
</feature>
<feature type="repeat" description="Solcar 1">
    <location>
        <begin position="9"/>
        <end position="78"/>
    </location>
</feature>
<feature type="repeat" description="Solcar 2">
    <location>
        <begin position="81"/>
        <end position="160"/>
    </location>
</feature>
<feature type="repeat" description="Solcar 3">
    <location>
        <begin position="165"/>
        <end position="246"/>
    </location>
</feature>
<organism>
    <name type="scientific">Schizosaccharomyces pombe (strain 972 / ATCC 24843)</name>
    <name type="common">Fission yeast</name>
    <dbReference type="NCBI Taxonomy" id="284812"/>
    <lineage>
        <taxon>Eukaryota</taxon>
        <taxon>Fungi</taxon>
        <taxon>Dikarya</taxon>
        <taxon>Ascomycota</taxon>
        <taxon>Taphrinomycotina</taxon>
        <taxon>Schizosaccharomycetes</taxon>
        <taxon>Schizosaccharomycetales</taxon>
        <taxon>Schizosaccharomycetaceae</taxon>
        <taxon>Schizosaccharomyces</taxon>
    </lineage>
</organism>
<sequence length="258" mass="28372">MTDDEVQWKPILVGGLSGLVAETLVFPLSTIITRVQSSLSFQQAGGFQHLYRGLSSVLVSTLPSASSFFFVYEYAKARQKPGVRNHLVSASVAEVVSCGILAPAEVVRQRAQISKTSVSQIFQSMIHNYRDLWHSFKGMCGRNVPATAFQFVLYEQFKKKFSATDHVFGAPKGAALSGAITAAVLTPLDVIKTQINLRPESYRKVVRRIYKENGIFGFEKGLGLRVFASSLGLSIYLGTYEHVKSHLHIRKAGEVSVA</sequence>